<organism>
    <name type="scientific">Prochlorococcus marinus subsp. pastoris (strain CCMP1986 / NIES-2087 / MED4)</name>
    <dbReference type="NCBI Taxonomy" id="59919"/>
    <lineage>
        <taxon>Bacteria</taxon>
        <taxon>Bacillati</taxon>
        <taxon>Cyanobacteriota</taxon>
        <taxon>Cyanophyceae</taxon>
        <taxon>Synechococcales</taxon>
        <taxon>Prochlorococcaceae</taxon>
        <taxon>Prochlorococcus</taxon>
    </lineage>
</organism>
<reference key="1">
    <citation type="journal article" date="2003" name="Nature">
        <title>Genome divergence in two Prochlorococcus ecotypes reflects oceanic niche differentiation.</title>
        <authorList>
            <person name="Rocap G."/>
            <person name="Larimer F.W."/>
            <person name="Lamerdin J.E."/>
            <person name="Malfatti S."/>
            <person name="Chain P."/>
            <person name="Ahlgren N.A."/>
            <person name="Arellano A."/>
            <person name="Coleman M."/>
            <person name="Hauser L."/>
            <person name="Hess W.R."/>
            <person name="Johnson Z.I."/>
            <person name="Land M.L."/>
            <person name="Lindell D."/>
            <person name="Post A.F."/>
            <person name="Regala W."/>
            <person name="Shah M."/>
            <person name="Shaw S.L."/>
            <person name="Steglich C."/>
            <person name="Sullivan M.B."/>
            <person name="Ting C.S."/>
            <person name="Tolonen A."/>
            <person name="Webb E.A."/>
            <person name="Zinser E.R."/>
            <person name="Chisholm S.W."/>
        </authorList>
    </citation>
    <scope>NUCLEOTIDE SEQUENCE [LARGE SCALE GENOMIC DNA]</scope>
    <source>
        <strain>CCMP1986 / NIES-2087 / MED4</strain>
    </source>
</reference>
<sequence>MKRVALVIQYDGSYFSGWQRQKNAISVQETIENCLFKISNQIIKTFASGRTDAGVHASGQVIHFDIDFLIPIDRYADVLNSRLPHTIRILESVEVKSSWHACYSAVYRHYRYVINNNKIPNLFLNKWSWHRYQKYLDEVSMSIALDGMIGEHDFFAFQKSGSNRSTSVTTIKDIKLERTEDLILIDIKATGFLYGMVRSIVGQLVLVGEKKITPDIFKDRWVLKKKHDVRESAPAKGLCFVNSVYEENIFKRINKNDLFPKFVIRGYS</sequence>
<gene>
    <name evidence="1" type="primary">truA</name>
    <name type="ordered locus">PMM1533</name>
</gene>
<protein>
    <recommendedName>
        <fullName evidence="1">tRNA pseudouridine synthase A</fullName>
        <ecNumber evidence="1">5.4.99.12</ecNumber>
    </recommendedName>
    <alternativeName>
        <fullName evidence="1">tRNA pseudouridine(38-40) synthase</fullName>
    </alternativeName>
    <alternativeName>
        <fullName evidence="1">tRNA pseudouridylate synthase I</fullName>
    </alternativeName>
    <alternativeName>
        <fullName evidence="1">tRNA-uridine isomerase I</fullName>
    </alternativeName>
</protein>
<accession>Q7TU31</accession>
<name>TRUA_PROMP</name>
<proteinExistence type="inferred from homology"/>
<dbReference type="EC" id="5.4.99.12" evidence="1"/>
<dbReference type="EMBL" id="BX548174">
    <property type="protein sequence ID" value="CAE19992.1"/>
    <property type="molecule type" value="Genomic_DNA"/>
</dbReference>
<dbReference type="RefSeq" id="WP_011133161.1">
    <property type="nucleotide sequence ID" value="NC_005072.1"/>
</dbReference>
<dbReference type="SMR" id="Q7TU31"/>
<dbReference type="STRING" id="59919.PMM1533"/>
<dbReference type="KEGG" id="pmm:PMM1533"/>
<dbReference type="eggNOG" id="COG0101">
    <property type="taxonomic scope" value="Bacteria"/>
</dbReference>
<dbReference type="HOGENOM" id="CLU_014673_0_1_3"/>
<dbReference type="OrthoDB" id="9811823at2"/>
<dbReference type="Proteomes" id="UP000001026">
    <property type="component" value="Chromosome"/>
</dbReference>
<dbReference type="GO" id="GO:0003723">
    <property type="term" value="F:RNA binding"/>
    <property type="evidence" value="ECO:0007669"/>
    <property type="project" value="InterPro"/>
</dbReference>
<dbReference type="GO" id="GO:0160147">
    <property type="term" value="F:tRNA pseudouridine(38-40) synthase activity"/>
    <property type="evidence" value="ECO:0007669"/>
    <property type="project" value="UniProtKB-EC"/>
</dbReference>
<dbReference type="GO" id="GO:0031119">
    <property type="term" value="P:tRNA pseudouridine synthesis"/>
    <property type="evidence" value="ECO:0007669"/>
    <property type="project" value="UniProtKB-UniRule"/>
</dbReference>
<dbReference type="CDD" id="cd02570">
    <property type="entry name" value="PseudoU_synth_EcTruA"/>
    <property type="match status" value="1"/>
</dbReference>
<dbReference type="FunFam" id="3.30.70.580:FF:000001">
    <property type="entry name" value="tRNA pseudouridine synthase A"/>
    <property type="match status" value="1"/>
</dbReference>
<dbReference type="Gene3D" id="3.30.70.660">
    <property type="entry name" value="Pseudouridine synthase I, catalytic domain, C-terminal subdomain"/>
    <property type="match status" value="1"/>
</dbReference>
<dbReference type="Gene3D" id="3.30.70.580">
    <property type="entry name" value="Pseudouridine synthase I, catalytic domain, N-terminal subdomain"/>
    <property type="match status" value="1"/>
</dbReference>
<dbReference type="HAMAP" id="MF_00171">
    <property type="entry name" value="TruA"/>
    <property type="match status" value="1"/>
</dbReference>
<dbReference type="InterPro" id="IPR020103">
    <property type="entry name" value="PsdUridine_synth_cat_dom_sf"/>
</dbReference>
<dbReference type="InterPro" id="IPR001406">
    <property type="entry name" value="PsdUridine_synth_TruA"/>
</dbReference>
<dbReference type="InterPro" id="IPR020097">
    <property type="entry name" value="PsdUridine_synth_TruA_a/b_dom"/>
</dbReference>
<dbReference type="InterPro" id="IPR020095">
    <property type="entry name" value="PsdUridine_synth_TruA_C"/>
</dbReference>
<dbReference type="InterPro" id="IPR020094">
    <property type="entry name" value="TruA/RsuA/RluB/E/F_N"/>
</dbReference>
<dbReference type="NCBIfam" id="TIGR00071">
    <property type="entry name" value="hisT_truA"/>
    <property type="match status" value="1"/>
</dbReference>
<dbReference type="PANTHER" id="PTHR11142">
    <property type="entry name" value="PSEUDOURIDYLATE SYNTHASE"/>
    <property type="match status" value="1"/>
</dbReference>
<dbReference type="PANTHER" id="PTHR11142:SF0">
    <property type="entry name" value="TRNA PSEUDOURIDINE SYNTHASE-LIKE 1"/>
    <property type="match status" value="1"/>
</dbReference>
<dbReference type="Pfam" id="PF01416">
    <property type="entry name" value="PseudoU_synth_1"/>
    <property type="match status" value="2"/>
</dbReference>
<dbReference type="PIRSF" id="PIRSF001430">
    <property type="entry name" value="tRNA_psdUrid_synth"/>
    <property type="match status" value="1"/>
</dbReference>
<dbReference type="SUPFAM" id="SSF55120">
    <property type="entry name" value="Pseudouridine synthase"/>
    <property type="match status" value="1"/>
</dbReference>
<comment type="function">
    <text evidence="1">Formation of pseudouridine at positions 38, 39 and 40 in the anticodon stem and loop of transfer RNAs.</text>
</comment>
<comment type="catalytic activity">
    <reaction evidence="1">
        <text>uridine(38/39/40) in tRNA = pseudouridine(38/39/40) in tRNA</text>
        <dbReference type="Rhea" id="RHEA:22376"/>
        <dbReference type="Rhea" id="RHEA-COMP:10085"/>
        <dbReference type="Rhea" id="RHEA-COMP:10087"/>
        <dbReference type="ChEBI" id="CHEBI:65314"/>
        <dbReference type="ChEBI" id="CHEBI:65315"/>
        <dbReference type="EC" id="5.4.99.12"/>
    </reaction>
</comment>
<comment type="subunit">
    <text evidence="1">Homodimer.</text>
</comment>
<comment type="similarity">
    <text evidence="1">Belongs to the tRNA pseudouridine synthase TruA family.</text>
</comment>
<feature type="chain" id="PRO_0000057433" description="tRNA pseudouridine synthase A">
    <location>
        <begin position="1"/>
        <end position="268"/>
    </location>
</feature>
<feature type="active site" description="Nucleophile" evidence="1">
    <location>
        <position position="52"/>
    </location>
</feature>
<feature type="binding site" evidence="1">
    <location>
        <position position="110"/>
    </location>
    <ligand>
        <name>substrate</name>
    </ligand>
</feature>
<evidence type="ECO:0000255" key="1">
    <source>
        <dbReference type="HAMAP-Rule" id="MF_00171"/>
    </source>
</evidence>
<keyword id="KW-0413">Isomerase</keyword>
<keyword id="KW-0819">tRNA processing</keyword>